<feature type="chain" id="PRO_1000128094" description="Small ribosomal subunit protein uS9">
    <location>
        <begin position="1"/>
        <end position="130"/>
    </location>
</feature>
<comment type="similarity">
    <text evidence="1">Belongs to the universal ribosomal protein uS9 family.</text>
</comment>
<sequence length="130" mass="14279">MIGNWNYGTGRRKSAVARVFIKAGKGDIIVNGKPIADYFARETSLMIVRQPLELTNHAQTFDIKVNVSGGGETGQAGAVRHGITRALIDYDATLKPALSNAGFVTRDAREVERKKVGLHKARRAKQFSKR</sequence>
<reference key="1">
    <citation type="submission" date="2007-10" db="EMBL/GenBank/DDBJ databases">
        <title>Complete sequence of chromosome 1 of Burkholderia multivorans ATCC 17616.</title>
        <authorList>
            <person name="Copeland A."/>
            <person name="Lucas S."/>
            <person name="Lapidus A."/>
            <person name="Barry K."/>
            <person name="Glavina del Rio T."/>
            <person name="Dalin E."/>
            <person name="Tice H."/>
            <person name="Pitluck S."/>
            <person name="Chain P."/>
            <person name="Malfatti S."/>
            <person name="Shin M."/>
            <person name="Vergez L."/>
            <person name="Schmutz J."/>
            <person name="Larimer F."/>
            <person name="Land M."/>
            <person name="Hauser L."/>
            <person name="Kyrpides N."/>
            <person name="Kim E."/>
            <person name="Tiedje J."/>
            <person name="Richardson P."/>
        </authorList>
    </citation>
    <scope>NUCLEOTIDE SEQUENCE [LARGE SCALE GENOMIC DNA]</scope>
    <source>
        <strain>ATCC 17616 / 249</strain>
    </source>
</reference>
<reference key="2">
    <citation type="submission" date="2007-04" db="EMBL/GenBank/DDBJ databases">
        <title>Complete genome sequence of Burkholderia multivorans ATCC 17616.</title>
        <authorList>
            <person name="Ohtsubo Y."/>
            <person name="Yamashita A."/>
            <person name="Kurokawa K."/>
            <person name="Takami H."/>
            <person name="Yuhara S."/>
            <person name="Nishiyama E."/>
            <person name="Endo R."/>
            <person name="Miyazaki R."/>
            <person name="Ono A."/>
            <person name="Yano K."/>
            <person name="Ito M."/>
            <person name="Sota M."/>
            <person name="Yuji N."/>
            <person name="Hattori M."/>
            <person name="Tsuda M."/>
        </authorList>
    </citation>
    <scope>NUCLEOTIDE SEQUENCE [LARGE SCALE GENOMIC DNA]</scope>
    <source>
        <strain>ATCC 17616 / 249</strain>
    </source>
</reference>
<proteinExistence type="inferred from homology"/>
<accession>A9AH80</accession>
<gene>
    <name evidence="1" type="primary">rpsI</name>
    <name type="ordered locus">Bmul_2703</name>
    <name type="ordered locus">BMULJ_00535</name>
</gene>
<organism>
    <name type="scientific">Burkholderia multivorans (strain ATCC 17616 / 249)</name>
    <dbReference type="NCBI Taxonomy" id="395019"/>
    <lineage>
        <taxon>Bacteria</taxon>
        <taxon>Pseudomonadati</taxon>
        <taxon>Pseudomonadota</taxon>
        <taxon>Betaproteobacteria</taxon>
        <taxon>Burkholderiales</taxon>
        <taxon>Burkholderiaceae</taxon>
        <taxon>Burkholderia</taxon>
        <taxon>Burkholderia cepacia complex</taxon>
    </lineage>
</organism>
<name>RS9_BURM1</name>
<keyword id="KW-1185">Reference proteome</keyword>
<keyword id="KW-0687">Ribonucleoprotein</keyword>
<keyword id="KW-0689">Ribosomal protein</keyword>
<dbReference type="EMBL" id="CP000868">
    <property type="protein sequence ID" value="ABX16387.1"/>
    <property type="molecule type" value="Genomic_DNA"/>
</dbReference>
<dbReference type="EMBL" id="AP009385">
    <property type="protein sequence ID" value="BAG42499.1"/>
    <property type="molecule type" value="Genomic_DNA"/>
</dbReference>
<dbReference type="RefSeq" id="WP_006401689.1">
    <property type="nucleotide sequence ID" value="NC_010804.1"/>
</dbReference>
<dbReference type="SMR" id="A9AH80"/>
<dbReference type="STRING" id="395019.BMULJ_00535"/>
<dbReference type="GeneID" id="89568962"/>
<dbReference type="KEGG" id="bmj:BMULJ_00535"/>
<dbReference type="KEGG" id="bmu:Bmul_2703"/>
<dbReference type="eggNOG" id="COG0103">
    <property type="taxonomic scope" value="Bacteria"/>
</dbReference>
<dbReference type="HOGENOM" id="CLU_046483_2_1_4"/>
<dbReference type="Proteomes" id="UP000008815">
    <property type="component" value="Chromosome 1"/>
</dbReference>
<dbReference type="GO" id="GO:0022627">
    <property type="term" value="C:cytosolic small ribosomal subunit"/>
    <property type="evidence" value="ECO:0007669"/>
    <property type="project" value="TreeGrafter"/>
</dbReference>
<dbReference type="GO" id="GO:0003723">
    <property type="term" value="F:RNA binding"/>
    <property type="evidence" value="ECO:0007669"/>
    <property type="project" value="TreeGrafter"/>
</dbReference>
<dbReference type="GO" id="GO:0003735">
    <property type="term" value="F:structural constituent of ribosome"/>
    <property type="evidence" value="ECO:0007669"/>
    <property type="project" value="InterPro"/>
</dbReference>
<dbReference type="GO" id="GO:0006412">
    <property type="term" value="P:translation"/>
    <property type="evidence" value="ECO:0007669"/>
    <property type="project" value="UniProtKB-UniRule"/>
</dbReference>
<dbReference type="FunFam" id="3.30.230.10:FF:000001">
    <property type="entry name" value="30S ribosomal protein S9"/>
    <property type="match status" value="1"/>
</dbReference>
<dbReference type="Gene3D" id="3.30.230.10">
    <property type="match status" value="1"/>
</dbReference>
<dbReference type="HAMAP" id="MF_00532_B">
    <property type="entry name" value="Ribosomal_uS9_B"/>
    <property type="match status" value="1"/>
</dbReference>
<dbReference type="InterPro" id="IPR020568">
    <property type="entry name" value="Ribosomal_Su5_D2-typ_SF"/>
</dbReference>
<dbReference type="InterPro" id="IPR000754">
    <property type="entry name" value="Ribosomal_uS9"/>
</dbReference>
<dbReference type="InterPro" id="IPR023035">
    <property type="entry name" value="Ribosomal_uS9_bac/plastid"/>
</dbReference>
<dbReference type="InterPro" id="IPR020574">
    <property type="entry name" value="Ribosomal_uS9_CS"/>
</dbReference>
<dbReference type="InterPro" id="IPR014721">
    <property type="entry name" value="Ribsml_uS5_D2-typ_fold_subgr"/>
</dbReference>
<dbReference type="NCBIfam" id="NF001099">
    <property type="entry name" value="PRK00132.1"/>
    <property type="match status" value="1"/>
</dbReference>
<dbReference type="PANTHER" id="PTHR21569">
    <property type="entry name" value="RIBOSOMAL PROTEIN S9"/>
    <property type="match status" value="1"/>
</dbReference>
<dbReference type="PANTHER" id="PTHR21569:SF1">
    <property type="entry name" value="SMALL RIBOSOMAL SUBUNIT PROTEIN US9M"/>
    <property type="match status" value="1"/>
</dbReference>
<dbReference type="Pfam" id="PF00380">
    <property type="entry name" value="Ribosomal_S9"/>
    <property type="match status" value="1"/>
</dbReference>
<dbReference type="SUPFAM" id="SSF54211">
    <property type="entry name" value="Ribosomal protein S5 domain 2-like"/>
    <property type="match status" value="1"/>
</dbReference>
<dbReference type="PROSITE" id="PS00360">
    <property type="entry name" value="RIBOSOMAL_S9"/>
    <property type="match status" value="1"/>
</dbReference>
<evidence type="ECO:0000255" key="1">
    <source>
        <dbReference type="HAMAP-Rule" id="MF_00532"/>
    </source>
</evidence>
<evidence type="ECO:0000305" key="2"/>
<protein>
    <recommendedName>
        <fullName evidence="1">Small ribosomal subunit protein uS9</fullName>
    </recommendedName>
    <alternativeName>
        <fullName evidence="2">30S ribosomal protein S9</fullName>
    </alternativeName>
</protein>